<feature type="chain" id="PRO_0000147544" description="Tetrahydromethanopterin S-methyltransferase subunit E">
    <location>
        <begin position="1"/>
        <end position="295"/>
    </location>
</feature>
<feature type="transmembrane region" description="Helical" evidence="1">
    <location>
        <begin position="4"/>
        <end position="24"/>
    </location>
</feature>
<feature type="transmembrane region" description="Helical" evidence="1">
    <location>
        <begin position="60"/>
        <end position="80"/>
    </location>
</feature>
<feature type="transmembrane region" description="Helical" evidence="1">
    <location>
        <begin position="87"/>
        <end position="107"/>
    </location>
</feature>
<feature type="transmembrane region" description="Helical" evidence="1">
    <location>
        <begin position="140"/>
        <end position="160"/>
    </location>
</feature>
<feature type="transmembrane region" description="Helical" evidence="1">
    <location>
        <begin position="161"/>
        <end position="181"/>
    </location>
</feature>
<feature type="transmembrane region" description="Helical" evidence="1">
    <location>
        <begin position="234"/>
        <end position="254"/>
    </location>
</feature>
<feature type="transmembrane region" description="Helical" evidence="1">
    <location>
        <begin position="255"/>
        <end position="275"/>
    </location>
</feature>
<keyword id="KW-0002">3D-structure</keyword>
<keyword id="KW-1003">Cell membrane</keyword>
<keyword id="KW-0903">Direct protein sequencing</keyword>
<keyword id="KW-0472">Membrane</keyword>
<keyword id="KW-0484">Methanogenesis</keyword>
<keyword id="KW-0489">Methyltransferase</keyword>
<keyword id="KW-0554">One-carbon metabolism</keyword>
<keyword id="KW-0808">Transferase</keyword>
<keyword id="KW-1278">Translocase</keyword>
<keyword id="KW-0812">Transmembrane</keyword>
<keyword id="KW-1133">Transmembrane helix</keyword>
<comment type="function">
    <text evidence="3">Part of a complex that catalyzes the formation of methyl-coenzyme M and tetrahydromethanopterin from coenzyme M and methyl-tetrahydromethanopterin. This is an energy-conserving, sodium-ion translocating step.</text>
</comment>
<comment type="catalytic activity">
    <reaction evidence="3">
        <text>5-methyl-5,6,7,8-tetrahydromethanopterin + coenzyme M + 2 Na(+)(in) = 5,6,7,8-tetrahydromethanopterin + methyl-coenzyme M + 2 Na(+)(out)</text>
        <dbReference type="Rhea" id="RHEA:53492"/>
        <dbReference type="ChEBI" id="CHEBI:29101"/>
        <dbReference type="ChEBI" id="CHEBI:58103"/>
        <dbReference type="ChEBI" id="CHEBI:58116"/>
        <dbReference type="ChEBI" id="CHEBI:58286"/>
        <dbReference type="ChEBI" id="CHEBI:58319"/>
        <dbReference type="EC" id="7.2.1.4"/>
    </reaction>
</comment>
<comment type="biophysicochemical properties">
    <kinetics>
        <KM evidence="3">260 uM for 5-methyl-5,6,7,8-tetrahydromethanopterin</KM>
        <KM evidence="3">60 uM for coenzyme M</KM>
        <Vmax evidence="3">11.6 umol/min/mg enzyme</Vmax>
        <text evidence="3">From other experiments a much lower Km for 5-methyl-5,6,7,8-tetrahydromethanopterin is estimated.</text>
    </kinetics>
</comment>
<comment type="pathway">
    <text>One-carbon metabolism; methanogenesis from CO(2); methyl-coenzyme M from 5,10-methylene-5,6,7,8-tetrahydromethanopterin: step 2/2.</text>
</comment>
<comment type="subunit">
    <text evidence="2">The complex is composed of 8 subunits; MtrA, MtrB, MtrC, MtrD, MtrE, MtrF, MtrG and MtrH.</text>
</comment>
<comment type="subcellular location">
    <subcellularLocation>
        <location evidence="5">Cell membrane</location>
        <topology evidence="5">Multi-pass membrane protein</topology>
    </subcellularLocation>
</comment>
<comment type="induction">
    <text evidence="6">The first gene of the probable mtrEDCBAFGH operon.</text>
</comment>
<comment type="similarity">
    <text evidence="5">Belongs to the MtrE family.</text>
</comment>
<reference key="1">
    <citation type="journal article" date="1995" name="Eur. J. Biochem.">
        <title>The energy conserving N5-methyltetrahydromethanopterin:coenzyme M methyltransferase complex from Methanobacterium thermoautotrophicum is composed of eight different subunits.</title>
        <authorList>
            <person name="Harms U."/>
            <person name="Weiss D.S."/>
            <person name="Gaertner P."/>
            <person name="Linder D."/>
            <person name="Thauer R.K."/>
        </authorList>
    </citation>
    <scope>NUCLEOTIDE SEQUENCE [GENOMIC DNA]</scope>
    <scope>SUBUNIT</scope>
    <scope>OPERON STRUCTURE</scope>
    <source>
        <strain>ATCC BAA-927 / DSM 2133 / JCM 14651 / NBRC 100331 / OCM 82 / Marburg</strain>
    </source>
</reference>
<reference key="2">
    <citation type="journal article" date="2010" name="J. Bacteriol.">
        <title>Complete genome sequence of Methanothermobacter marburgensis, a methanoarchaeon model organism.</title>
        <authorList>
            <person name="Liesegang H."/>
            <person name="Kaster A.K."/>
            <person name="Wiezer A."/>
            <person name="Goenrich M."/>
            <person name="Wollherr A."/>
            <person name="Seedorf H."/>
            <person name="Gottschalk G."/>
            <person name="Thauer R.K."/>
        </authorList>
    </citation>
    <scope>NUCLEOTIDE SEQUENCE [LARGE SCALE GENOMIC DNA]</scope>
    <source>
        <strain>ATCC BAA-927 / DSM 2133 / JCM 14651 / NBRC 100331 / OCM 82 / Marburg</strain>
    </source>
</reference>
<reference key="3">
    <citation type="journal article" date="1993" name="Eur. J. Biochem.">
        <title>Cloning, sequencing and immunological characterization of the corrinoid-containing subunit of the N5-methyltetrahydromethanopterin: coenzyme-M methyltransferase from Methanobacterium thermoautotrophicum.</title>
        <authorList>
            <person name="Stupperich E."/>
            <person name="Juza A."/>
            <person name="Hoppert M."/>
            <person name="Mayer F."/>
        </authorList>
    </citation>
    <scope>NUCLEOTIDE SEQUENCE [GENOMIC DNA] OF 81-295</scope>
    <source>
        <strain>ATCC BAA-927 / DSM 2133 / JCM 14651 / NBRC 100331 / OCM 82 / Marburg</strain>
    </source>
</reference>
<reference key="4">
    <citation type="journal article" date="1993" name="Eur. J. Biochem.">
        <title>Purification and properties of N5-methyltetrahydromethanopterin:coenzyme M methyltransferase from Methanobacterium thermoautotrophicum.</title>
        <authorList>
            <person name="Gaertner P."/>
            <person name="Ecker A."/>
            <person name="Fischer R."/>
            <person name="Linder D."/>
            <person name="Fuchs G."/>
            <person name="Thauer R.K."/>
        </authorList>
    </citation>
    <scope>PROTEIN SEQUENCE OF 1-30</scope>
    <scope>FUNCTION</scope>
    <scope>CATALYTIC ACTIVITY</scope>
    <scope>BIOPHYSICOCHEMICAL PROPERTIES</scope>
    <source>
        <strain>ATCC BAA-927 / DSM 2133 / JCM 14651 / NBRC 100331 / OCM 82 / Marburg</strain>
    </source>
</reference>
<protein>
    <recommendedName>
        <fullName>Tetrahydromethanopterin S-methyltransferase subunit E</fullName>
        <ecNumber evidence="3">7.2.1.4</ecNumber>
    </recommendedName>
    <alternativeName>
        <fullName>N5-methyltetrahydromethanopterin--coenzyme M methyltransferase subunit E</fullName>
    </alternativeName>
</protein>
<organism>
    <name type="scientific">Methanothermobacter marburgensis (strain ATCC BAA-927 / DSM 2133 / JCM 14651 / NBRC 100331 / OCM 82 / Marburg)</name>
    <name type="common">Methanobacterium thermoautotrophicum</name>
    <dbReference type="NCBI Taxonomy" id="79929"/>
    <lineage>
        <taxon>Archaea</taxon>
        <taxon>Methanobacteriati</taxon>
        <taxon>Methanobacteriota</taxon>
        <taxon>Methanomada group</taxon>
        <taxon>Methanobacteria</taxon>
        <taxon>Methanobacteriales</taxon>
        <taxon>Methanobacteriaceae</taxon>
        <taxon>Methanothermobacter</taxon>
    </lineage>
</organism>
<proteinExistence type="evidence at protein level"/>
<evidence type="ECO:0000255" key="1"/>
<evidence type="ECO:0000269" key="2">
    <source>
    </source>
</evidence>
<evidence type="ECO:0000269" key="3">
    <source>
    </source>
</evidence>
<evidence type="ECO:0000303" key="4">
    <source>
    </source>
</evidence>
<evidence type="ECO:0000305" key="5"/>
<evidence type="ECO:0000305" key="6">
    <source>
    </source>
</evidence>
<dbReference type="EC" id="7.2.1.4" evidence="3"/>
<dbReference type="EMBL" id="X84218">
    <property type="protein sequence ID" value="CAA59000.1"/>
    <property type="molecule type" value="Genomic_DNA"/>
</dbReference>
<dbReference type="EMBL" id="CP001710">
    <property type="protein sequence ID" value="ADL59126.1"/>
    <property type="molecule type" value="Genomic_DNA"/>
</dbReference>
<dbReference type="EMBL" id="X73123">
    <property type="protein sequence ID" value="CAA51552.1"/>
    <property type="molecule type" value="Genomic_DNA"/>
</dbReference>
<dbReference type="RefSeq" id="WP_013296336.1">
    <property type="nucleotide sequence ID" value="NC_014408.1"/>
</dbReference>
<dbReference type="PDB" id="8Q3V">
    <property type="method" value="EM"/>
    <property type="resolution" value="2.08 A"/>
    <property type="chains" value="E/U/e=1-295"/>
</dbReference>
<dbReference type="PDB" id="8Q54">
    <property type="method" value="EM"/>
    <property type="resolution" value="2.39 A"/>
    <property type="chains" value="E/U/e=1-295"/>
</dbReference>
<dbReference type="PDBsum" id="8Q3V"/>
<dbReference type="PDBsum" id="8Q54"/>
<dbReference type="EMDB" id="EMD-18135"/>
<dbReference type="EMDB" id="EMD-18162"/>
<dbReference type="SMR" id="P80186"/>
<dbReference type="STRING" id="79929.MTBMA_c15470"/>
<dbReference type="TCDB" id="3.C.1.1.1">
    <property type="family name" value="the na(+) transporting methyltetrahydromethanopterin:coenzyme m methyltransferase (nat-mmm) family"/>
</dbReference>
<dbReference type="PaxDb" id="79929-MTBMA_c15470"/>
<dbReference type="GeneID" id="41327320"/>
<dbReference type="GeneID" id="77400318"/>
<dbReference type="KEGG" id="mmg:MTBMA_c15470"/>
<dbReference type="PATRIC" id="fig|79929.8.peg.1500"/>
<dbReference type="HOGENOM" id="CLU_958513_0_0_2"/>
<dbReference type="OrthoDB" id="82302at2157"/>
<dbReference type="UniPathway" id="UPA00640">
    <property type="reaction ID" value="UER00698"/>
</dbReference>
<dbReference type="Proteomes" id="UP000000345">
    <property type="component" value="Chromosome"/>
</dbReference>
<dbReference type="GO" id="GO:0005737">
    <property type="term" value="C:cytoplasm"/>
    <property type="evidence" value="ECO:0007669"/>
    <property type="project" value="InterPro"/>
</dbReference>
<dbReference type="GO" id="GO:0034708">
    <property type="term" value="C:methyltransferase complex"/>
    <property type="evidence" value="ECO:0000314"/>
    <property type="project" value="UniProtKB"/>
</dbReference>
<dbReference type="GO" id="GO:0005886">
    <property type="term" value="C:plasma membrane"/>
    <property type="evidence" value="ECO:0007669"/>
    <property type="project" value="UniProtKB-SubCell"/>
</dbReference>
<dbReference type="GO" id="GO:0012506">
    <property type="term" value="C:vesicle membrane"/>
    <property type="evidence" value="ECO:0007669"/>
    <property type="project" value="InterPro"/>
</dbReference>
<dbReference type="GO" id="GO:0030269">
    <property type="term" value="F:tetrahydromethanopterin S-methyltransferase activity"/>
    <property type="evidence" value="ECO:0000314"/>
    <property type="project" value="MENGO"/>
</dbReference>
<dbReference type="GO" id="GO:0019386">
    <property type="term" value="P:methanogenesis, from carbon dioxide"/>
    <property type="evidence" value="ECO:0007669"/>
    <property type="project" value="UniProtKB-UniRule"/>
</dbReference>
<dbReference type="GO" id="GO:0032259">
    <property type="term" value="P:methylation"/>
    <property type="evidence" value="ECO:0007669"/>
    <property type="project" value="UniProtKB-KW"/>
</dbReference>
<dbReference type="GO" id="GO:0006730">
    <property type="term" value="P:one-carbon metabolic process"/>
    <property type="evidence" value="ECO:0007669"/>
    <property type="project" value="UniProtKB-UniRule"/>
</dbReference>
<dbReference type="HAMAP" id="MF_01098">
    <property type="entry name" value="MtrE"/>
    <property type="match status" value="1"/>
</dbReference>
<dbReference type="InterPro" id="IPR005780">
    <property type="entry name" value="MeTrfase_E"/>
</dbReference>
<dbReference type="NCBIfam" id="TIGR01113">
    <property type="entry name" value="mtrE"/>
    <property type="match status" value="1"/>
</dbReference>
<dbReference type="Pfam" id="PF04206">
    <property type="entry name" value="MtrE"/>
    <property type="match status" value="1"/>
</dbReference>
<dbReference type="PIRSF" id="PIRSF016509">
    <property type="entry name" value="MtrE"/>
    <property type="match status" value="1"/>
</dbReference>
<sequence>MDPMITGLGVVALMGAAATIAGAAEDLESDVGSQSNPNSQVQLAPQMGHLHRIINKAVSGEPVAYGTWCGIAGSVAFVLMNSMQLPVIMAIAIGAVIAAMVHTTYAVTSHMGRIVSQSQFNQPLFMDMLVQHLGPIAGHGFIVTFCTVGLSYLMTLPIPGFAHPFPLPLLAVLWGITIGAIGSSTGDVHYGAEREYQQYPFGGGIPVAIHGDITTKAELGARNSMDVVHFCAKYGGPLTGFAFGAIVFLSFWNTIVFGITGGIISGLIIVLLLIILNNRLEVFARNRYGPYKEEE</sequence>
<accession>P80186</accession>
<accession>D9PY28</accession>
<name>MTRE_METTM</name>
<gene>
    <name evidence="4" type="primary">mtrE</name>
    <name type="ordered locus">MTBMA_c15470</name>
</gene>